<protein>
    <recommendedName>
        <fullName evidence="5">Receptor-like protein 1</fullName>
        <shortName evidence="5">AtRLP1</shortName>
    </recommendedName>
    <alternativeName>
        <fullName evidence="6">Receptor of eMax</fullName>
    </alternativeName>
</protein>
<organism>
    <name type="scientific">Arabidopsis thaliana</name>
    <name type="common">Mouse-ear cress</name>
    <dbReference type="NCBI Taxonomy" id="3702"/>
    <lineage>
        <taxon>Eukaryota</taxon>
        <taxon>Viridiplantae</taxon>
        <taxon>Streptophyta</taxon>
        <taxon>Embryophyta</taxon>
        <taxon>Tracheophyta</taxon>
        <taxon>Spermatophyta</taxon>
        <taxon>Magnoliopsida</taxon>
        <taxon>eudicotyledons</taxon>
        <taxon>Gunneridae</taxon>
        <taxon>Pentapetalae</taxon>
        <taxon>rosids</taxon>
        <taxon>malvids</taxon>
        <taxon>Brassicales</taxon>
        <taxon>Brassicaceae</taxon>
        <taxon>Camelineae</taxon>
        <taxon>Arabidopsis</taxon>
    </lineage>
</organism>
<keyword id="KW-0024">Alternative initiation</keyword>
<keyword id="KW-1003">Cell membrane</keyword>
<keyword id="KW-0325">Glycoprotein</keyword>
<keyword id="KW-0391">Immunity</keyword>
<keyword id="KW-0399">Innate immunity</keyword>
<keyword id="KW-0433">Leucine-rich repeat</keyword>
<keyword id="KW-0472">Membrane</keyword>
<keyword id="KW-0611">Plant defense</keyword>
<keyword id="KW-0675">Receptor</keyword>
<keyword id="KW-1185">Reference proteome</keyword>
<keyword id="KW-0677">Repeat</keyword>
<keyword id="KW-0732">Signal</keyword>
<keyword id="KW-0812">Transmembrane</keyword>
<keyword id="KW-1133">Transmembrane helix</keyword>
<proteinExistence type="evidence at transcript level"/>
<name>RLP1_ARATH</name>
<sequence length="1077" mass="121495">MRTDERRRWWVKPKKHITLVFITITMIIQFQMKGCVSCVETERMGLLQLKSYLKNLVDAEEEEEEGLSILKSWTHHEGDCCRWERVKCSDAINGHVIGLSLDRLVPVAFESQTRSLNLSLLHSFPQLQSLNLSWNWFTNLSDHFLGFKSFGTLDKLTTLDFSHNMFDNSIVPFLNAATSIRSLHLESNYMEGVFPPQELSNMTNLRVLNLKDNSFSFLSSQGLTDFRDLEVLDLSFNGVNDSEASHSLSTAKLKTLDLNFNPLSDFSQLKGLESLQELQVLKLRGNKFNHTLSTHVLKDLKMLQELDLSDNGFTNLDHGRGLEIPTSLQVLDFKRNQLSLTHEGYLGICRLMKLRELDLSSNALTSLPYCLGNLTHLRTLDLSNNQLNGNLSSFVSGLPSVLEYLSLLDNNFDGSFLFNSLVNQTRLTVFKLSSKVGVIQVQTESSWAPLFQLKMLYLSNCSLGSTMLGFLVHQRDLCFVDLSHNKLTGTFPTWLVKNNTRLQTILLSGNSLTKLQLPILVHGLQVLDISSNMIYDSIQEDIGMVFPNLRFMNFSSNHFQGTIPSSIGEMKSLQVLDMSSNGLYGQLPIMFLSGCYSLRVLKLSNNQLQGKIFSKHANLTGLVGLFLDGNNFTGSLEEGLLKSKNLTLLDISDNRFSGMLPLWIGRISRLSYLYMSGNQLKGPFPFLRQSPWVEVMDISHNSFSGSIPRNVNFPSLRELRLQNNEFTGLVPGNLFKAAGLEVLDLRNNNFSGKILNTIDQTSKLRILLLRNNSFQTYIPGKICQLSEVGLLDLSHNQFRGPIPSCFSKMSFGAEQNDRTMSLVADFDFSYITFLPHCQYGSHLNLDDGVRNGYQPKPATVVDFLTKSRYEAYQGDILRYMHGLDLSSNELSGEIPIEIGDLQNIRSLNLSSNRLTGSIPDSISKLKGLESLDLSNNKLDGSIPPALADLNSLGYLNISYNNLSGEIPFKGHLVTFDERSYIGNAHLCGLPTNKNCISQRVPEPPSVSTHAKEEENEEEGNVIDMVWFYWTCAAVYISTSLALFAFLYIDSRWSREWFYRVDLCVHHILQFKRSSVCN</sequence>
<accession>Q9LNV9</accession>
<accession>A0A1P8AUZ2</accession>
<accession>F4HQM6</accession>
<accession>Q0WVH1</accession>
<accession>Q9LNV8</accession>
<feature type="signal peptide" evidence="1">
    <location>
        <begin position="1"/>
        <end position="38"/>
    </location>
</feature>
<feature type="chain" id="PRO_0000443337" description="Receptor-like protein 1">
    <location>
        <begin position="39"/>
        <end position="1077"/>
    </location>
</feature>
<feature type="topological domain" description="Extracellular" evidence="1">
    <location>
        <begin position="39"/>
        <end position="1024"/>
    </location>
</feature>
<feature type="transmembrane region" description="Helical" evidence="1">
    <location>
        <begin position="1025"/>
        <end position="1045"/>
    </location>
</feature>
<feature type="topological domain" description="Cytoplasmic" evidence="1">
    <location>
        <begin position="1046"/>
        <end position="1077"/>
    </location>
</feature>
<feature type="repeat" description="LRR 1" evidence="1">
    <location>
        <begin position="124"/>
        <end position="147"/>
    </location>
</feature>
<feature type="repeat" description="LRR 2" evidence="1">
    <location>
        <begin position="153"/>
        <end position="176"/>
    </location>
</feature>
<feature type="repeat" description="LRR 3" evidence="1">
    <location>
        <begin position="177"/>
        <end position="201"/>
    </location>
</feature>
<feature type="repeat" description="LRR 4" evidence="1">
    <location>
        <begin position="202"/>
        <end position="225"/>
    </location>
</feature>
<feature type="repeat" description="LRR 5" evidence="1">
    <location>
        <begin position="227"/>
        <end position="250"/>
    </location>
</feature>
<feature type="repeat" description="LRR 6" evidence="1">
    <location>
        <begin position="251"/>
        <end position="274"/>
    </location>
</feature>
<feature type="repeat" description="LRR 7" evidence="1">
    <location>
        <begin position="275"/>
        <end position="299"/>
    </location>
</feature>
<feature type="repeat" description="LRR 8" evidence="1">
    <location>
        <begin position="300"/>
        <end position="324"/>
    </location>
</feature>
<feature type="repeat" description="LRR 9" evidence="1">
    <location>
        <begin position="326"/>
        <end position="348"/>
    </location>
</feature>
<feature type="repeat" description="LRR 10" evidence="1">
    <location>
        <begin position="351"/>
        <end position="376"/>
    </location>
</feature>
<feature type="repeat" description="LRR 11" evidence="1">
    <location>
        <begin position="378"/>
        <end position="397"/>
    </location>
</feature>
<feature type="repeat" description="LRR 12" evidence="1">
    <location>
        <begin position="399"/>
        <end position="424"/>
    </location>
</feature>
<feature type="repeat" description="LRR 13; degenerate" evidence="7">
    <location>
        <begin position="425"/>
        <end position="449"/>
    </location>
</feature>
<feature type="repeat" description="LRR 14" evidence="1">
    <location>
        <begin position="450"/>
        <end position="473"/>
    </location>
</feature>
<feature type="repeat" description="LRR 15" evidence="1">
    <location>
        <begin position="474"/>
        <end position="498"/>
    </location>
</feature>
<feature type="repeat" description="LRR 16" evidence="1">
    <location>
        <begin position="499"/>
        <end position="522"/>
    </location>
</feature>
<feature type="repeat" description="LRR 17" evidence="1">
    <location>
        <begin position="524"/>
        <end position="545"/>
    </location>
</feature>
<feature type="repeat" description="LRR 18" evidence="1">
    <location>
        <begin position="546"/>
        <end position="570"/>
    </location>
</feature>
<feature type="repeat" description="LRR 19" evidence="1">
    <location>
        <begin position="572"/>
        <end position="594"/>
    </location>
</feature>
<feature type="repeat" description="LRR 20" evidence="1">
    <location>
        <begin position="595"/>
        <end position="621"/>
    </location>
</feature>
<feature type="repeat" description="LRR 21" evidence="1">
    <location>
        <begin position="623"/>
        <end position="643"/>
    </location>
</feature>
<feature type="repeat" description="LRR 22" evidence="1">
    <location>
        <begin position="644"/>
        <end position="666"/>
    </location>
</feature>
<feature type="repeat" description="LRR 23" evidence="1">
    <location>
        <begin position="667"/>
        <end position="694"/>
    </location>
</feature>
<feature type="repeat" description="LRR 24" evidence="1">
    <location>
        <begin position="696"/>
        <end position="713"/>
    </location>
</feature>
<feature type="repeat" description="LRR 25" evidence="1">
    <location>
        <begin position="714"/>
        <end position="737"/>
    </location>
</feature>
<feature type="repeat" description="LRR 26" evidence="1">
    <location>
        <begin position="739"/>
        <end position="761"/>
    </location>
</feature>
<feature type="repeat" description="LRR 27" evidence="1">
    <location>
        <begin position="762"/>
        <end position="785"/>
    </location>
</feature>
<feature type="repeat" description="LRR 28" evidence="1">
    <location>
        <begin position="786"/>
        <end position="808"/>
    </location>
</feature>
<feature type="repeat" description="LRR 29" evidence="1">
    <location>
        <begin position="877"/>
        <end position="901"/>
    </location>
</feature>
<feature type="repeat" description="LRR 30" evidence="1">
    <location>
        <begin position="902"/>
        <end position="925"/>
    </location>
</feature>
<feature type="repeat" description="LRR 31" evidence="1">
    <location>
        <begin position="927"/>
        <end position="949"/>
    </location>
</feature>
<feature type="repeat" description="LRR 32" evidence="1">
    <location>
        <begin position="951"/>
        <end position="970"/>
    </location>
</feature>
<feature type="region of interest" description="N-cap" evidence="8">
    <location>
        <begin position="39"/>
        <end position="120"/>
    </location>
</feature>
<feature type="region of interest" description="C-cap/acidic domain" evidence="8">
    <location>
        <begin position="971"/>
        <end position="1024"/>
    </location>
</feature>
<feature type="glycosylation site" description="N-linked (GlcNAc...) asparagine" evidence="2">
    <location>
        <position position="117"/>
    </location>
</feature>
<feature type="glycosylation site" description="N-linked (GlcNAc...) asparagine" evidence="2">
    <location>
        <position position="131"/>
    </location>
</feature>
<feature type="glycosylation site" description="N-linked (GlcNAc...) asparagine" evidence="2">
    <location>
        <position position="139"/>
    </location>
</feature>
<feature type="glycosylation site" description="N-linked (GlcNAc...) asparagine" evidence="2">
    <location>
        <position position="201"/>
    </location>
</feature>
<feature type="glycosylation site" description="N-linked (GlcNAc...) asparagine" evidence="2">
    <location>
        <position position="240"/>
    </location>
</feature>
<feature type="glycosylation site" description="N-linked (GlcNAc...) asparagine" evidence="2">
    <location>
        <position position="289"/>
    </location>
</feature>
<feature type="glycosylation site" description="N-linked (GlcNAc...) asparagine" evidence="2">
    <location>
        <position position="373"/>
    </location>
</feature>
<feature type="glycosylation site" description="N-linked (GlcNAc...) asparagine" evidence="2">
    <location>
        <position position="390"/>
    </location>
</feature>
<feature type="glycosylation site" description="N-linked (GlcNAc...) asparagine" evidence="2">
    <location>
        <position position="423"/>
    </location>
</feature>
<feature type="glycosylation site" description="N-linked (GlcNAc...) asparagine" evidence="2">
    <location>
        <position position="460"/>
    </location>
</feature>
<feature type="glycosylation site" description="N-linked (GlcNAc...) asparagine" evidence="2">
    <location>
        <position position="498"/>
    </location>
</feature>
<feature type="glycosylation site" description="N-linked (GlcNAc...) asparagine" evidence="2">
    <location>
        <position position="553"/>
    </location>
</feature>
<feature type="glycosylation site" description="N-linked (GlcNAc...) asparagine" evidence="2">
    <location>
        <position position="618"/>
    </location>
</feature>
<feature type="glycosylation site" description="N-linked (GlcNAc...) asparagine" evidence="2">
    <location>
        <position position="631"/>
    </location>
</feature>
<feature type="glycosylation site" description="N-linked (GlcNAc...) asparagine" evidence="2">
    <location>
        <position position="645"/>
    </location>
</feature>
<feature type="glycosylation site" description="N-linked (GlcNAc...) asparagine" evidence="2">
    <location>
        <position position="749"/>
    </location>
</feature>
<feature type="glycosylation site" description="N-linked (GlcNAc...) asparagine" evidence="2">
    <location>
        <position position="771"/>
    </location>
</feature>
<feature type="glycosylation site" description="N-linked (GlcNAc...) asparagine" evidence="2">
    <location>
        <position position="908"/>
    </location>
</feature>
<feature type="glycosylation site" description="N-linked (GlcNAc...) asparagine" evidence="2">
    <location>
        <position position="956"/>
    </location>
</feature>
<feature type="glycosylation site" description="N-linked (GlcNAc...) asparagine" evidence="2">
    <location>
        <position position="961"/>
    </location>
</feature>
<feature type="splice variant" id="VSP_059332" description="In isoform 2.">
    <location>
        <begin position="1"/>
        <end position="164"/>
    </location>
</feature>
<evidence type="ECO:0000255" key="1"/>
<evidence type="ECO:0000255" key="2">
    <source>
        <dbReference type="PROSITE-ProRule" id="PRU00498"/>
    </source>
</evidence>
<evidence type="ECO:0000269" key="3">
    <source>
    </source>
</evidence>
<evidence type="ECO:0000269" key="4">
    <source>
    </source>
</evidence>
<evidence type="ECO:0000303" key="5">
    <source>
    </source>
</evidence>
<evidence type="ECO:0000303" key="6">
    <source>
    </source>
</evidence>
<evidence type="ECO:0000305" key="7"/>
<evidence type="ECO:0000305" key="8">
    <source>
    </source>
</evidence>
<evidence type="ECO:0000312" key="9">
    <source>
        <dbReference type="Araport" id="AT1G07390"/>
    </source>
</evidence>
<evidence type="ECO:0000312" key="10">
    <source>
        <dbReference type="EMBL" id="AAF79567.1"/>
    </source>
</evidence>
<evidence type="ECO:0000312" key="11">
    <source>
        <dbReference type="EMBL" id="AAF79568.1"/>
    </source>
</evidence>
<dbReference type="EMBL" id="AC022464">
    <property type="protein sequence ID" value="AAF79567.1"/>
    <property type="status" value="ALT_SEQ"/>
    <property type="molecule type" value="Genomic_DNA"/>
</dbReference>
<dbReference type="EMBL" id="AC022464">
    <property type="protein sequence ID" value="AAF79568.1"/>
    <property type="status" value="ALT_SEQ"/>
    <property type="molecule type" value="Genomic_DNA"/>
</dbReference>
<dbReference type="EMBL" id="CP002684">
    <property type="protein sequence ID" value="ANM60456.1"/>
    <property type="molecule type" value="Genomic_DNA"/>
</dbReference>
<dbReference type="EMBL" id="CP002684">
    <property type="protein sequence ID" value="AEE28118.1"/>
    <property type="molecule type" value="Genomic_DNA"/>
</dbReference>
<dbReference type="EMBL" id="AK226779">
    <property type="protein sequence ID" value="BAE98877.1"/>
    <property type="status" value="ALT_INIT"/>
    <property type="molecule type" value="mRNA"/>
</dbReference>
<dbReference type="PIR" id="H86208">
    <property type="entry name" value="H86208"/>
</dbReference>
<dbReference type="RefSeq" id="NP_001154317.1">
    <molecule id="Q9LNV9-2"/>
    <property type="nucleotide sequence ID" value="NM_001160845.2"/>
</dbReference>
<dbReference type="RefSeq" id="NP_001322741.1">
    <molecule id="Q9LNV9-1"/>
    <property type="nucleotide sequence ID" value="NM_001331697.1"/>
</dbReference>
<dbReference type="SMR" id="Q9LNV9"/>
<dbReference type="STRING" id="3702.Q9LNV9"/>
<dbReference type="GlyCosmos" id="Q9LNV9">
    <property type="glycosylation" value="20 sites, No reported glycans"/>
</dbReference>
<dbReference type="GlyGen" id="Q9LNV9">
    <property type="glycosylation" value="20 sites"/>
</dbReference>
<dbReference type="iPTMnet" id="Q9LNV9"/>
<dbReference type="PaxDb" id="3702-AT1G07390.3"/>
<dbReference type="ProteomicsDB" id="227994">
    <molecule id="Q9LNV9-1"/>
</dbReference>
<dbReference type="EnsemblPlants" id="AT1G07390.2">
    <molecule id="Q9LNV9-2"/>
    <property type="protein sequence ID" value="AT1G07390.2"/>
    <property type="gene ID" value="AT1G07390"/>
</dbReference>
<dbReference type="EnsemblPlants" id="AT1G07390.4">
    <molecule id="Q9LNV9-1"/>
    <property type="protein sequence ID" value="AT1G07390.4"/>
    <property type="gene ID" value="AT1G07390"/>
</dbReference>
<dbReference type="GeneID" id="837251"/>
<dbReference type="Gramene" id="AT1G07390.2">
    <molecule id="Q9LNV9-2"/>
    <property type="protein sequence ID" value="AT1G07390.2"/>
    <property type="gene ID" value="AT1G07390"/>
</dbReference>
<dbReference type="Gramene" id="AT1G07390.4">
    <molecule id="Q9LNV9-1"/>
    <property type="protein sequence ID" value="AT1G07390.4"/>
    <property type="gene ID" value="AT1G07390"/>
</dbReference>
<dbReference type="KEGG" id="ath:AT1G07390"/>
<dbReference type="Araport" id="AT1G07390"/>
<dbReference type="TAIR" id="AT1G07390">
    <property type="gene designation" value="RLP1"/>
</dbReference>
<dbReference type="InParanoid" id="Q9LNV9"/>
<dbReference type="PRO" id="PR:Q9LNV9"/>
<dbReference type="Proteomes" id="UP000006548">
    <property type="component" value="Chromosome 1"/>
</dbReference>
<dbReference type="ExpressionAtlas" id="Q9LNV9">
    <property type="expression patterns" value="baseline and differential"/>
</dbReference>
<dbReference type="GO" id="GO:0005886">
    <property type="term" value="C:plasma membrane"/>
    <property type="evidence" value="ECO:0007669"/>
    <property type="project" value="UniProtKB-SubCell"/>
</dbReference>
<dbReference type="GO" id="GO:0042742">
    <property type="term" value="P:defense response to bacterium"/>
    <property type="evidence" value="ECO:0000314"/>
    <property type="project" value="UniProtKB"/>
</dbReference>
<dbReference type="GO" id="GO:0045087">
    <property type="term" value="P:innate immune response"/>
    <property type="evidence" value="ECO:0007669"/>
    <property type="project" value="UniProtKB-KW"/>
</dbReference>
<dbReference type="FunFam" id="3.80.10.10:FF:001999">
    <property type="entry name" value="Receptor like protein 45"/>
    <property type="match status" value="1"/>
</dbReference>
<dbReference type="Gene3D" id="3.80.10.10">
    <property type="entry name" value="Ribonuclease Inhibitor"/>
    <property type="match status" value="4"/>
</dbReference>
<dbReference type="InterPro" id="IPR001611">
    <property type="entry name" value="Leu-rich_rpt"/>
</dbReference>
<dbReference type="InterPro" id="IPR025875">
    <property type="entry name" value="Leu-rich_rpt_4"/>
</dbReference>
<dbReference type="InterPro" id="IPR003591">
    <property type="entry name" value="Leu-rich_rpt_typical-subtyp"/>
</dbReference>
<dbReference type="InterPro" id="IPR032675">
    <property type="entry name" value="LRR_dom_sf"/>
</dbReference>
<dbReference type="InterPro" id="IPR013210">
    <property type="entry name" value="LRR_N_plant-typ"/>
</dbReference>
<dbReference type="InterPro" id="IPR051502">
    <property type="entry name" value="RLP_Defense_Trigger"/>
</dbReference>
<dbReference type="PANTHER" id="PTHR48062:SF63">
    <property type="entry name" value="RECEPTOR-LIKE PROTEIN 1"/>
    <property type="match status" value="1"/>
</dbReference>
<dbReference type="PANTHER" id="PTHR48062">
    <property type="entry name" value="RECEPTOR-LIKE PROTEIN 14"/>
    <property type="match status" value="1"/>
</dbReference>
<dbReference type="Pfam" id="PF00560">
    <property type="entry name" value="LRR_1"/>
    <property type="match status" value="4"/>
</dbReference>
<dbReference type="Pfam" id="PF12799">
    <property type="entry name" value="LRR_4"/>
    <property type="match status" value="1"/>
</dbReference>
<dbReference type="Pfam" id="PF13855">
    <property type="entry name" value="LRR_8"/>
    <property type="match status" value="3"/>
</dbReference>
<dbReference type="Pfam" id="PF08263">
    <property type="entry name" value="LRRNT_2"/>
    <property type="match status" value="1"/>
</dbReference>
<dbReference type="PRINTS" id="PR00019">
    <property type="entry name" value="LEURICHRPT"/>
</dbReference>
<dbReference type="SMART" id="SM00365">
    <property type="entry name" value="LRR_SD22"/>
    <property type="match status" value="8"/>
</dbReference>
<dbReference type="SMART" id="SM00369">
    <property type="entry name" value="LRR_TYP"/>
    <property type="match status" value="11"/>
</dbReference>
<dbReference type="SUPFAM" id="SSF52058">
    <property type="entry name" value="L domain-like"/>
    <property type="match status" value="4"/>
</dbReference>
<dbReference type="PROSITE" id="PS51450">
    <property type="entry name" value="LRR"/>
    <property type="match status" value="24"/>
</dbReference>
<comment type="function">
    <text evidence="3 4">Involved in plant defense. Confers resistance to the bacterial pathogen Xanthomonas through recognition of the microbe-associated molecular pattern (MAMP) eMax (PubMed:23898033, PubMed:24384530). Functionality seems to depend on the presence of the receptor kinase SOBIR1 as an adapter protein (PubMed:24384530).</text>
</comment>
<comment type="subcellular location">
    <subcellularLocation>
        <location evidence="7">Cell membrane</location>
        <topology evidence="7">Single-pass type I membrane protein</topology>
    </subcellularLocation>
</comment>
<comment type="alternative products">
    <event type="alternative initiation"/>
    <isoform>
        <id>Q9LNV9-1</id>
        <name>1</name>
        <sequence type="displayed"/>
    </isoform>
    <isoform>
        <id>Q9LNV9-2</id>
        <name>2</name>
        <sequence type="described" ref="VSP_059332"/>
    </isoform>
</comment>
<comment type="disruption phenotype">
    <text evidence="3">Lack of responsiveness to MAMP eMax from Xanthomonas.</text>
</comment>
<comment type="similarity">
    <text evidence="7">Belongs to the RLP family.</text>
</comment>
<comment type="sequence caution" evidence="7">
    <conflict type="erroneous gene model prediction">
        <sequence resource="EMBL-CDS" id="AAF79567"/>
    </conflict>
    <text>Was originally thought to correspond to two different genes.</text>
</comment>
<comment type="sequence caution" evidence="7">
    <conflict type="erroneous gene model prediction">
        <sequence resource="EMBL-CDS" id="AAF79568"/>
    </conflict>
    <text>Was originally thought to correspond to two different genes.</text>
</comment>
<comment type="sequence caution" evidence="7">
    <conflict type="erroneous initiation">
        <sequence resource="EMBL-CDS" id="BAE98877"/>
    </conflict>
    <text>Truncated N-terminus.</text>
</comment>
<reference key="1">
    <citation type="journal article" date="2000" name="Nature">
        <title>Sequence and analysis of chromosome 1 of the plant Arabidopsis thaliana.</title>
        <authorList>
            <person name="Theologis A."/>
            <person name="Ecker J.R."/>
            <person name="Palm C.J."/>
            <person name="Federspiel N.A."/>
            <person name="Kaul S."/>
            <person name="White O."/>
            <person name="Alonso J."/>
            <person name="Altafi H."/>
            <person name="Araujo R."/>
            <person name="Bowman C.L."/>
            <person name="Brooks S.Y."/>
            <person name="Buehler E."/>
            <person name="Chan A."/>
            <person name="Chao Q."/>
            <person name="Chen H."/>
            <person name="Cheuk R.F."/>
            <person name="Chin C.W."/>
            <person name="Chung M.K."/>
            <person name="Conn L."/>
            <person name="Conway A.B."/>
            <person name="Conway A.R."/>
            <person name="Creasy T.H."/>
            <person name="Dewar K."/>
            <person name="Dunn P."/>
            <person name="Etgu P."/>
            <person name="Feldblyum T.V."/>
            <person name="Feng J.-D."/>
            <person name="Fong B."/>
            <person name="Fujii C.Y."/>
            <person name="Gill J.E."/>
            <person name="Goldsmith A.D."/>
            <person name="Haas B."/>
            <person name="Hansen N.F."/>
            <person name="Hughes B."/>
            <person name="Huizar L."/>
            <person name="Hunter J.L."/>
            <person name="Jenkins J."/>
            <person name="Johnson-Hopson C."/>
            <person name="Khan S."/>
            <person name="Khaykin E."/>
            <person name="Kim C.J."/>
            <person name="Koo H.L."/>
            <person name="Kremenetskaia I."/>
            <person name="Kurtz D.B."/>
            <person name="Kwan A."/>
            <person name="Lam B."/>
            <person name="Langin-Hooper S."/>
            <person name="Lee A."/>
            <person name="Lee J.M."/>
            <person name="Lenz C.A."/>
            <person name="Li J.H."/>
            <person name="Li Y.-P."/>
            <person name="Lin X."/>
            <person name="Liu S.X."/>
            <person name="Liu Z.A."/>
            <person name="Luros J.S."/>
            <person name="Maiti R."/>
            <person name="Marziali A."/>
            <person name="Militscher J."/>
            <person name="Miranda M."/>
            <person name="Nguyen M."/>
            <person name="Nierman W.C."/>
            <person name="Osborne B.I."/>
            <person name="Pai G."/>
            <person name="Peterson J."/>
            <person name="Pham P.K."/>
            <person name="Rizzo M."/>
            <person name="Rooney T."/>
            <person name="Rowley D."/>
            <person name="Sakano H."/>
            <person name="Salzberg S.L."/>
            <person name="Schwartz J.R."/>
            <person name="Shinn P."/>
            <person name="Southwick A.M."/>
            <person name="Sun H."/>
            <person name="Tallon L.J."/>
            <person name="Tambunga G."/>
            <person name="Toriumi M.J."/>
            <person name="Town C.D."/>
            <person name="Utterback T."/>
            <person name="Van Aken S."/>
            <person name="Vaysberg M."/>
            <person name="Vysotskaia V.S."/>
            <person name="Walker M."/>
            <person name="Wu D."/>
            <person name="Yu G."/>
            <person name="Fraser C.M."/>
            <person name="Venter J.C."/>
            <person name="Davis R.W."/>
        </authorList>
    </citation>
    <scope>NUCLEOTIDE SEQUENCE [LARGE SCALE GENOMIC DNA]</scope>
    <source>
        <strain>cv. Columbia</strain>
    </source>
</reference>
<reference key="2">
    <citation type="journal article" date="2017" name="Plant J.">
        <title>Araport11: a complete reannotation of the Arabidopsis thaliana reference genome.</title>
        <authorList>
            <person name="Cheng C.Y."/>
            <person name="Krishnakumar V."/>
            <person name="Chan A.P."/>
            <person name="Thibaud-Nissen F."/>
            <person name="Schobel S."/>
            <person name="Town C.D."/>
        </authorList>
    </citation>
    <scope>GENOME REANNOTATION</scope>
    <source>
        <strain>cv. Columbia</strain>
    </source>
</reference>
<reference key="3">
    <citation type="submission" date="2006-07" db="EMBL/GenBank/DDBJ databases">
        <title>Large-scale analysis of RIKEN Arabidopsis full-length (RAFL) cDNAs.</title>
        <authorList>
            <person name="Totoki Y."/>
            <person name="Seki M."/>
            <person name="Ishida J."/>
            <person name="Nakajima M."/>
            <person name="Enju A."/>
            <person name="Kamiya A."/>
            <person name="Narusaka M."/>
            <person name="Shin-i T."/>
            <person name="Nakagawa M."/>
            <person name="Sakamoto N."/>
            <person name="Oishi K."/>
            <person name="Kohara Y."/>
            <person name="Kobayashi M."/>
            <person name="Toyoda A."/>
            <person name="Sakaki Y."/>
            <person name="Sakurai T."/>
            <person name="Iida K."/>
            <person name="Akiyama K."/>
            <person name="Satou M."/>
            <person name="Toyoda T."/>
            <person name="Konagaya A."/>
            <person name="Carninci P."/>
            <person name="Kawai J."/>
            <person name="Hayashizaki Y."/>
            <person name="Shinozaki K."/>
        </authorList>
    </citation>
    <scope>NUCLEOTIDE SEQUENCE [LARGE SCALE MRNA] (ISOFORM 2)</scope>
    <source>
        <strain>cv. Columbia</strain>
    </source>
</reference>
<reference key="4">
    <citation type="journal article" date="2005" name="Plant Physiol.">
        <title>Phylogenomic analysis of the receptor-like proteins of rice and Arabidopsis.</title>
        <authorList>
            <person name="Fritz-Laylin L.K."/>
            <person name="Krishnamurthy N."/>
            <person name="Toer M."/>
            <person name="Sjoelander K.V."/>
            <person name="Jones J.D."/>
        </authorList>
    </citation>
    <scope>GENE FAMILY</scope>
</reference>
<reference key="5">
    <citation type="journal article" date="2008" name="Plant Physiol.">
        <title>A genome-wide functional investigation into the roles of receptor-like proteins in Arabidopsis.</title>
        <authorList>
            <person name="Wang G."/>
            <person name="Ellendorff U."/>
            <person name="Kemp B."/>
            <person name="Mansfield J.W."/>
            <person name="Forsyth A."/>
            <person name="Mitchell K."/>
            <person name="Bastas K."/>
            <person name="Liu C.-M."/>
            <person name="Woods-Toer A."/>
            <person name="Zipfel C."/>
            <person name="de Wit P.J.G.M."/>
            <person name="Jones J.D.G."/>
            <person name="Toer M."/>
            <person name="Thomma B.P.H.J."/>
        </authorList>
    </citation>
    <scope>GENE FAMILY</scope>
    <scope>NOMENCLATURE</scope>
</reference>
<reference key="6">
    <citation type="journal article" date="2013" name="Plant Cell">
        <title>The receptor-like protein ReMAX of Arabidopsis detects the microbe-associated molecular pattern eMax from Xanthomonas.</title>
        <authorList>
            <person name="Jehle A.K."/>
            <person name="Lipschis M."/>
            <person name="Albert M."/>
            <person name="Fallahzadeh-Mamaghani V."/>
            <person name="Fuerst U."/>
            <person name="Mueller K."/>
            <person name="Felix G."/>
        </authorList>
    </citation>
    <scope>FUNCTION</scope>
    <scope>DISRUPTION PHENOTYPE</scope>
</reference>
<reference key="7">
    <citation type="journal article" date="2013" name="Plant Signal. Behav.">
        <title>Perception of the novel MAMP eMax from different Xanthomonas species requires the Arabidopsis receptor-like protein ReMAX and the receptor kinase SOBIR.</title>
        <authorList>
            <person name="Jehle A.K."/>
            <person name="Fuerst U."/>
            <person name="Lipschis M."/>
            <person name="Albert M."/>
            <person name="Felix G."/>
        </authorList>
    </citation>
    <scope>FUNCTION</scope>
</reference>
<reference key="8">
    <citation type="journal article" date="2014" name="Curr. Opin. Plant Biol.">
        <title>Receptor like proteins associate with SOBIR1-type of adaptors to form bimolecular receptor kinases.</title>
        <authorList>
            <person name="Gust A.A."/>
            <person name="Felix G."/>
        </authorList>
    </citation>
    <scope>REVIEW</scope>
</reference>
<gene>
    <name evidence="5" type="primary">RLP1</name>
    <name evidence="6" type="synonym">REMAX</name>
    <name evidence="9" type="ordered locus">At1g07390</name>
    <name evidence="10 11" type="ORF">F22G5.27/F22G5.26</name>
</gene>